<protein>
    <recommendedName>
        <fullName evidence="1">Small ribosomal subunit protein eS4</fullName>
    </recommendedName>
    <alternativeName>
        <fullName>30S ribosomal protein S4e</fullName>
    </alternativeName>
</protein>
<accession>O59430</accession>
<evidence type="ECO:0000305" key="1"/>
<reference key="1">
    <citation type="journal article" date="1998" name="DNA Res.">
        <title>Complete sequence and gene organization of the genome of a hyper-thermophilic archaebacterium, Pyrococcus horikoshii OT3.</title>
        <authorList>
            <person name="Kawarabayasi Y."/>
            <person name="Sawada M."/>
            <person name="Horikawa H."/>
            <person name="Haikawa Y."/>
            <person name="Hino Y."/>
            <person name="Yamamoto S."/>
            <person name="Sekine M."/>
            <person name="Baba S."/>
            <person name="Kosugi H."/>
            <person name="Hosoyama A."/>
            <person name="Nagai Y."/>
            <person name="Sakai M."/>
            <person name="Ogura K."/>
            <person name="Otsuka R."/>
            <person name="Nakazawa H."/>
            <person name="Takamiya M."/>
            <person name="Ohfuku Y."/>
            <person name="Funahashi T."/>
            <person name="Tanaka T."/>
            <person name="Kudoh Y."/>
            <person name="Yamazaki J."/>
            <person name="Kushida N."/>
            <person name="Oguchi A."/>
            <person name="Aoki K."/>
            <person name="Yoshizawa T."/>
            <person name="Nakamura Y."/>
            <person name="Robb F.T."/>
            <person name="Horikoshi K."/>
            <person name="Masuchi Y."/>
            <person name="Shizuya H."/>
            <person name="Kikuchi H."/>
        </authorList>
    </citation>
    <scope>NUCLEOTIDE SEQUENCE [LARGE SCALE GENOMIC DNA]</scope>
    <source>
        <strain>ATCC 700860 / DSM 12428 / JCM 9974 / NBRC 100139 / OT-3</strain>
    </source>
</reference>
<keyword id="KW-0687">Ribonucleoprotein</keyword>
<keyword id="KW-0689">Ribosomal protein</keyword>
<keyword id="KW-0694">RNA-binding</keyword>
<keyword id="KW-0699">rRNA-binding</keyword>
<name>RS4E_PYRHO</name>
<gene>
    <name type="primary">rps4e</name>
    <name type="ordered locus">PH1766</name>
</gene>
<organism>
    <name type="scientific">Pyrococcus horikoshii (strain ATCC 700860 / DSM 12428 / JCM 9974 / NBRC 100139 / OT-3)</name>
    <dbReference type="NCBI Taxonomy" id="70601"/>
    <lineage>
        <taxon>Archaea</taxon>
        <taxon>Methanobacteriati</taxon>
        <taxon>Methanobacteriota</taxon>
        <taxon>Thermococci</taxon>
        <taxon>Thermococcales</taxon>
        <taxon>Thermococcaceae</taxon>
        <taxon>Pyrococcus</taxon>
    </lineage>
</organism>
<proteinExistence type="inferred from homology"/>
<dbReference type="EMBL" id="BA000001">
    <property type="protein sequence ID" value="BAA30881.1"/>
    <property type="molecule type" value="Genomic_DNA"/>
</dbReference>
<dbReference type="PIR" id="B71186">
    <property type="entry name" value="B71186"/>
</dbReference>
<dbReference type="RefSeq" id="WP_010885828.1">
    <property type="nucleotide sequence ID" value="NC_000961.1"/>
</dbReference>
<dbReference type="SMR" id="O59430"/>
<dbReference type="STRING" id="70601.gene:9378764"/>
<dbReference type="EnsemblBacteria" id="BAA30881">
    <property type="protein sequence ID" value="BAA30881"/>
    <property type="gene ID" value="BAA30881"/>
</dbReference>
<dbReference type="GeneID" id="1442610"/>
<dbReference type="KEGG" id="pho:PH1766"/>
<dbReference type="eggNOG" id="arCOG04093">
    <property type="taxonomic scope" value="Archaea"/>
</dbReference>
<dbReference type="OrthoDB" id="372073at2157"/>
<dbReference type="Proteomes" id="UP000000752">
    <property type="component" value="Chromosome"/>
</dbReference>
<dbReference type="GO" id="GO:0022627">
    <property type="term" value="C:cytosolic small ribosomal subunit"/>
    <property type="evidence" value="ECO:0007669"/>
    <property type="project" value="TreeGrafter"/>
</dbReference>
<dbReference type="GO" id="GO:0019843">
    <property type="term" value="F:rRNA binding"/>
    <property type="evidence" value="ECO:0007669"/>
    <property type="project" value="UniProtKB-KW"/>
</dbReference>
<dbReference type="GO" id="GO:0003735">
    <property type="term" value="F:structural constituent of ribosome"/>
    <property type="evidence" value="ECO:0007669"/>
    <property type="project" value="InterPro"/>
</dbReference>
<dbReference type="GO" id="GO:0006412">
    <property type="term" value="P:translation"/>
    <property type="evidence" value="ECO:0007669"/>
    <property type="project" value="UniProtKB-UniRule"/>
</dbReference>
<dbReference type="CDD" id="cd06087">
    <property type="entry name" value="KOW_RPS4"/>
    <property type="match status" value="1"/>
</dbReference>
<dbReference type="CDD" id="cd00165">
    <property type="entry name" value="S4"/>
    <property type="match status" value="1"/>
</dbReference>
<dbReference type="FunFam" id="2.30.30.30:FF:000090">
    <property type="entry name" value="30S ribosomal protein S4e"/>
    <property type="match status" value="1"/>
</dbReference>
<dbReference type="FunFam" id="3.10.290.10:FF:000002">
    <property type="entry name" value="40S ribosomal protein S4"/>
    <property type="match status" value="1"/>
</dbReference>
<dbReference type="Gene3D" id="2.30.30.30">
    <property type="match status" value="1"/>
</dbReference>
<dbReference type="Gene3D" id="2.40.50.740">
    <property type="match status" value="1"/>
</dbReference>
<dbReference type="Gene3D" id="3.10.290.10">
    <property type="entry name" value="RNA-binding S4 domain"/>
    <property type="match status" value="1"/>
</dbReference>
<dbReference type="HAMAP" id="MF_00485">
    <property type="entry name" value="Ribosomal_eS4"/>
    <property type="match status" value="1"/>
</dbReference>
<dbReference type="InterPro" id="IPR005824">
    <property type="entry name" value="KOW"/>
</dbReference>
<dbReference type="InterPro" id="IPR014722">
    <property type="entry name" value="Rib_uL2_dom2"/>
</dbReference>
<dbReference type="InterPro" id="IPR000876">
    <property type="entry name" value="Ribosomal_eS4"/>
</dbReference>
<dbReference type="InterPro" id="IPR013845">
    <property type="entry name" value="Ribosomal_eS4_central_region"/>
</dbReference>
<dbReference type="InterPro" id="IPR038237">
    <property type="entry name" value="Ribosomal_eS4_central_sf"/>
</dbReference>
<dbReference type="InterPro" id="IPR041982">
    <property type="entry name" value="Ribosomal_eS4_KOW"/>
</dbReference>
<dbReference type="InterPro" id="IPR013843">
    <property type="entry name" value="Ribosomal_eS4_N"/>
</dbReference>
<dbReference type="InterPro" id="IPR018199">
    <property type="entry name" value="Ribosomal_eS4_N_CS"/>
</dbReference>
<dbReference type="InterPro" id="IPR002942">
    <property type="entry name" value="S4_RNA-bd"/>
</dbReference>
<dbReference type="InterPro" id="IPR036986">
    <property type="entry name" value="S4_RNA-bd_sf"/>
</dbReference>
<dbReference type="NCBIfam" id="NF003312">
    <property type="entry name" value="PRK04313.1"/>
    <property type="match status" value="1"/>
</dbReference>
<dbReference type="PANTHER" id="PTHR11581">
    <property type="entry name" value="30S/40S RIBOSOMAL PROTEIN S4"/>
    <property type="match status" value="1"/>
</dbReference>
<dbReference type="PANTHER" id="PTHR11581:SF0">
    <property type="entry name" value="SMALL RIBOSOMAL SUBUNIT PROTEIN ES4"/>
    <property type="match status" value="1"/>
</dbReference>
<dbReference type="Pfam" id="PF00900">
    <property type="entry name" value="Ribosomal_S4e"/>
    <property type="match status" value="1"/>
</dbReference>
<dbReference type="Pfam" id="PF08071">
    <property type="entry name" value="RS4NT"/>
    <property type="match status" value="1"/>
</dbReference>
<dbReference type="Pfam" id="PF01479">
    <property type="entry name" value="S4"/>
    <property type="match status" value="1"/>
</dbReference>
<dbReference type="PIRSF" id="PIRSF002116">
    <property type="entry name" value="Ribosomal_S4"/>
    <property type="match status" value="1"/>
</dbReference>
<dbReference type="SMART" id="SM00739">
    <property type="entry name" value="KOW"/>
    <property type="match status" value="1"/>
</dbReference>
<dbReference type="SMART" id="SM00363">
    <property type="entry name" value="S4"/>
    <property type="match status" value="1"/>
</dbReference>
<dbReference type="SUPFAM" id="SSF55174">
    <property type="entry name" value="Alpha-L RNA-binding motif"/>
    <property type="match status" value="1"/>
</dbReference>
<dbReference type="PROSITE" id="PS00528">
    <property type="entry name" value="RIBOSOMAL_S4E"/>
    <property type="match status" value="1"/>
</dbReference>
<dbReference type="PROSITE" id="PS50889">
    <property type="entry name" value="S4"/>
    <property type="match status" value="1"/>
</dbReference>
<sequence>MARKGPKRHLKRLAAPSSWYIERKAYKWAVRPRPGPHNMRTSIPLLYIVRDYLGYAKTAREARKILNEGKFLVDGKVRKDYKFPVGIMDVVSIPETGEHYRVLPNRIGKLVLHPISEEEANIKPLRIRNKRMVKGAKVQLNFHDGTNHLIPLTEKDNYFTSYTVLMKVPEREIMEVLPFEKGAYVFVTQGKNVARKGRIVEIKKFPMGWPDVVTIEDEEGELFDTLKEYAFVVGKDKPKISLP</sequence>
<comment type="similarity">
    <text evidence="1">Belongs to the eukaryotic ribosomal protein eS4 family.</text>
</comment>
<feature type="chain" id="PRO_0000130860" description="Small ribosomal subunit protein eS4">
    <location>
        <begin position="1"/>
        <end position="243"/>
    </location>
</feature>
<feature type="domain" description="S4 RNA-binding">
    <location>
        <begin position="43"/>
        <end position="105"/>
    </location>
</feature>